<sequence length="398" mass="43335">MSERKLFTSESVSEGHPDKIADQISDAILDAILEQDPDAHVAAETAVYTGSVHVFGEISTTAYVDINRVVRNTIAEIGYDKAEYGFSAESVGVHPSLVEQSPDIAQGVNEALEVRGSLEQDPLDLIGAGDQGLMFGFAVDETPELMPLPISLAHQLVKKLTDLRKSGELTYLRPDAKSQVTVEYDENDQPIRVDAVVISTQHDPNVTNDQLHKDVIEKVINEVIPSHYLDDQTKFFINPTGRFVIGGPQGDSGLTGRKIIVDTYGGYSRHGGGAFSGKDATKVDRSASYAARYIAKNIVAADLAKKVEVQLAYAIGVAQPVSVRVDTFGTGVIAEADLEAAVRQIFDLRPAGIINMLDLKRPIYRQTAAYGHMGRTDIDLPWERVDKVQALKDFIASK</sequence>
<keyword id="KW-0067">ATP-binding</keyword>
<keyword id="KW-0963">Cytoplasm</keyword>
<keyword id="KW-0460">Magnesium</keyword>
<keyword id="KW-0479">Metal-binding</keyword>
<keyword id="KW-0547">Nucleotide-binding</keyword>
<keyword id="KW-0554">One-carbon metabolism</keyword>
<keyword id="KW-0630">Potassium</keyword>
<keyword id="KW-1185">Reference proteome</keyword>
<keyword id="KW-0808">Transferase</keyword>
<dbReference type="EC" id="2.5.1.6" evidence="1"/>
<dbReference type="EMBL" id="AE009948">
    <property type="protein sequence ID" value="AAM99718.1"/>
    <property type="molecule type" value="Genomic_DNA"/>
</dbReference>
<dbReference type="RefSeq" id="NP_687846.1">
    <property type="nucleotide sequence ID" value="NC_004116.1"/>
</dbReference>
<dbReference type="RefSeq" id="WP_000003955.1">
    <property type="nucleotide sequence ID" value="NC_004116.1"/>
</dbReference>
<dbReference type="SMR" id="Q8E0A3"/>
<dbReference type="STRING" id="208435.SAG0831"/>
<dbReference type="KEGG" id="sag:SAG0831"/>
<dbReference type="PATRIC" id="fig|208435.3.peg.837"/>
<dbReference type="HOGENOM" id="CLU_041802_1_1_9"/>
<dbReference type="OrthoDB" id="9801686at2"/>
<dbReference type="UniPathway" id="UPA00315">
    <property type="reaction ID" value="UER00080"/>
</dbReference>
<dbReference type="Proteomes" id="UP000000821">
    <property type="component" value="Chromosome"/>
</dbReference>
<dbReference type="GO" id="GO:0005737">
    <property type="term" value="C:cytoplasm"/>
    <property type="evidence" value="ECO:0007669"/>
    <property type="project" value="UniProtKB-SubCell"/>
</dbReference>
<dbReference type="GO" id="GO:0005524">
    <property type="term" value="F:ATP binding"/>
    <property type="evidence" value="ECO:0007669"/>
    <property type="project" value="UniProtKB-UniRule"/>
</dbReference>
<dbReference type="GO" id="GO:0000287">
    <property type="term" value="F:magnesium ion binding"/>
    <property type="evidence" value="ECO:0007669"/>
    <property type="project" value="UniProtKB-UniRule"/>
</dbReference>
<dbReference type="GO" id="GO:0004478">
    <property type="term" value="F:methionine adenosyltransferase activity"/>
    <property type="evidence" value="ECO:0007669"/>
    <property type="project" value="UniProtKB-UniRule"/>
</dbReference>
<dbReference type="GO" id="GO:0006730">
    <property type="term" value="P:one-carbon metabolic process"/>
    <property type="evidence" value="ECO:0007669"/>
    <property type="project" value="UniProtKB-KW"/>
</dbReference>
<dbReference type="GO" id="GO:0006556">
    <property type="term" value="P:S-adenosylmethionine biosynthetic process"/>
    <property type="evidence" value="ECO:0007669"/>
    <property type="project" value="UniProtKB-UniRule"/>
</dbReference>
<dbReference type="CDD" id="cd18079">
    <property type="entry name" value="S-AdoMet_synt"/>
    <property type="match status" value="1"/>
</dbReference>
<dbReference type="FunFam" id="3.30.300.10:FF:000003">
    <property type="entry name" value="S-adenosylmethionine synthase"/>
    <property type="match status" value="1"/>
</dbReference>
<dbReference type="Gene3D" id="3.30.300.10">
    <property type="match status" value="3"/>
</dbReference>
<dbReference type="HAMAP" id="MF_00086">
    <property type="entry name" value="S_AdoMet_synth1"/>
    <property type="match status" value="1"/>
</dbReference>
<dbReference type="InterPro" id="IPR022631">
    <property type="entry name" value="ADOMET_SYNTHASE_CS"/>
</dbReference>
<dbReference type="InterPro" id="IPR022630">
    <property type="entry name" value="S-AdoMet_synt_C"/>
</dbReference>
<dbReference type="InterPro" id="IPR022629">
    <property type="entry name" value="S-AdoMet_synt_central"/>
</dbReference>
<dbReference type="InterPro" id="IPR022628">
    <property type="entry name" value="S-AdoMet_synt_N"/>
</dbReference>
<dbReference type="InterPro" id="IPR002133">
    <property type="entry name" value="S-AdoMet_synthetase"/>
</dbReference>
<dbReference type="InterPro" id="IPR022636">
    <property type="entry name" value="S-AdoMet_synthetase_sfam"/>
</dbReference>
<dbReference type="NCBIfam" id="TIGR01034">
    <property type="entry name" value="metK"/>
    <property type="match status" value="1"/>
</dbReference>
<dbReference type="PANTHER" id="PTHR11964">
    <property type="entry name" value="S-ADENOSYLMETHIONINE SYNTHETASE"/>
    <property type="match status" value="1"/>
</dbReference>
<dbReference type="Pfam" id="PF02773">
    <property type="entry name" value="S-AdoMet_synt_C"/>
    <property type="match status" value="1"/>
</dbReference>
<dbReference type="Pfam" id="PF02772">
    <property type="entry name" value="S-AdoMet_synt_M"/>
    <property type="match status" value="1"/>
</dbReference>
<dbReference type="Pfam" id="PF00438">
    <property type="entry name" value="S-AdoMet_synt_N"/>
    <property type="match status" value="1"/>
</dbReference>
<dbReference type="PIRSF" id="PIRSF000497">
    <property type="entry name" value="MAT"/>
    <property type="match status" value="1"/>
</dbReference>
<dbReference type="SUPFAM" id="SSF55973">
    <property type="entry name" value="S-adenosylmethionine synthetase"/>
    <property type="match status" value="3"/>
</dbReference>
<dbReference type="PROSITE" id="PS00376">
    <property type="entry name" value="ADOMET_SYNTHASE_1"/>
    <property type="match status" value="1"/>
</dbReference>
<dbReference type="PROSITE" id="PS00377">
    <property type="entry name" value="ADOMET_SYNTHASE_2"/>
    <property type="match status" value="1"/>
</dbReference>
<evidence type="ECO:0000255" key="1">
    <source>
        <dbReference type="HAMAP-Rule" id="MF_00086"/>
    </source>
</evidence>
<organism>
    <name type="scientific">Streptococcus agalactiae serotype V (strain ATCC BAA-611 / 2603 V/R)</name>
    <dbReference type="NCBI Taxonomy" id="208435"/>
    <lineage>
        <taxon>Bacteria</taxon>
        <taxon>Bacillati</taxon>
        <taxon>Bacillota</taxon>
        <taxon>Bacilli</taxon>
        <taxon>Lactobacillales</taxon>
        <taxon>Streptococcaceae</taxon>
        <taxon>Streptococcus</taxon>
    </lineage>
</organism>
<accession>Q8E0A3</accession>
<feature type="chain" id="PRO_0000174596" description="S-adenosylmethionine synthase">
    <location>
        <begin position="1"/>
        <end position="398"/>
    </location>
</feature>
<feature type="region of interest" description="Flexible loop" evidence="1">
    <location>
        <begin position="100"/>
        <end position="110"/>
    </location>
</feature>
<feature type="binding site" description="in other chain" evidence="1">
    <location>
        <position position="16"/>
    </location>
    <ligand>
        <name>ATP</name>
        <dbReference type="ChEBI" id="CHEBI:30616"/>
        <note>ligand shared between two neighboring subunits</note>
    </ligand>
</feature>
<feature type="binding site" evidence="1">
    <location>
        <position position="18"/>
    </location>
    <ligand>
        <name>Mg(2+)</name>
        <dbReference type="ChEBI" id="CHEBI:18420"/>
    </ligand>
</feature>
<feature type="binding site" evidence="1">
    <location>
        <position position="44"/>
    </location>
    <ligand>
        <name>K(+)</name>
        <dbReference type="ChEBI" id="CHEBI:29103"/>
    </ligand>
</feature>
<feature type="binding site" description="in other chain" evidence="1">
    <location>
        <position position="57"/>
    </location>
    <ligand>
        <name>L-methionine</name>
        <dbReference type="ChEBI" id="CHEBI:57844"/>
        <note>ligand shared between two neighboring subunits</note>
    </ligand>
</feature>
<feature type="binding site" description="in other chain" evidence="1">
    <location>
        <position position="100"/>
    </location>
    <ligand>
        <name>L-methionine</name>
        <dbReference type="ChEBI" id="CHEBI:57844"/>
        <note>ligand shared between two neighboring subunits</note>
    </ligand>
</feature>
<feature type="binding site" description="in other chain" evidence="1">
    <location>
        <begin position="175"/>
        <end position="177"/>
    </location>
    <ligand>
        <name>ATP</name>
        <dbReference type="ChEBI" id="CHEBI:30616"/>
        <note>ligand shared between two neighboring subunits</note>
    </ligand>
</feature>
<feature type="binding site" description="in other chain" evidence="1">
    <location>
        <begin position="242"/>
        <end position="243"/>
    </location>
    <ligand>
        <name>ATP</name>
        <dbReference type="ChEBI" id="CHEBI:30616"/>
        <note>ligand shared between two neighboring subunits</note>
    </ligand>
</feature>
<feature type="binding site" evidence="1">
    <location>
        <position position="251"/>
    </location>
    <ligand>
        <name>ATP</name>
        <dbReference type="ChEBI" id="CHEBI:30616"/>
        <note>ligand shared between two neighboring subunits</note>
    </ligand>
</feature>
<feature type="binding site" evidence="1">
    <location>
        <position position="251"/>
    </location>
    <ligand>
        <name>L-methionine</name>
        <dbReference type="ChEBI" id="CHEBI:57844"/>
        <note>ligand shared between two neighboring subunits</note>
    </ligand>
</feature>
<feature type="binding site" description="in other chain" evidence="1">
    <location>
        <begin position="257"/>
        <end position="258"/>
    </location>
    <ligand>
        <name>ATP</name>
        <dbReference type="ChEBI" id="CHEBI:30616"/>
        <note>ligand shared between two neighboring subunits</note>
    </ligand>
</feature>
<feature type="binding site" evidence="1">
    <location>
        <position position="274"/>
    </location>
    <ligand>
        <name>ATP</name>
        <dbReference type="ChEBI" id="CHEBI:30616"/>
        <note>ligand shared between two neighboring subunits</note>
    </ligand>
</feature>
<feature type="binding site" evidence="1">
    <location>
        <position position="278"/>
    </location>
    <ligand>
        <name>ATP</name>
        <dbReference type="ChEBI" id="CHEBI:30616"/>
        <note>ligand shared between two neighboring subunits</note>
    </ligand>
</feature>
<feature type="binding site" description="in other chain" evidence="1">
    <location>
        <position position="282"/>
    </location>
    <ligand>
        <name>L-methionine</name>
        <dbReference type="ChEBI" id="CHEBI:57844"/>
        <note>ligand shared between two neighboring subunits</note>
    </ligand>
</feature>
<name>METK_STRA5</name>
<reference key="1">
    <citation type="journal article" date="2002" name="Proc. Natl. Acad. Sci. U.S.A.">
        <title>Complete genome sequence and comparative genomic analysis of an emerging human pathogen, serotype V Streptococcus agalactiae.</title>
        <authorList>
            <person name="Tettelin H."/>
            <person name="Masignani V."/>
            <person name="Cieslewicz M.J."/>
            <person name="Eisen J.A."/>
            <person name="Peterson S.N."/>
            <person name="Wessels M.R."/>
            <person name="Paulsen I.T."/>
            <person name="Nelson K.E."/>
            <person name="Margarit I."/>
            <person name="Read T.D."/>
            <person name="Madoff L.C."/>
            <person name="Wolf A.M."/>
            <person name="Beanan M.J."/>
            <person name="Brinkac L.M."/>
            <person name="Daugherty S.C."/>
            <person name="DeBoy R.T."/>
            <person name="Durkin A.S."/>
            <person name="Kolonay J.F."/>
            <person name="Madupu R."/>
            <person name="Lewis M.R."/>
            <person name="Radune D."/>
            <person name="Fedorova N.B."/>
            <person name="Scanlan D."/>
            <person name="Khouri H.M."/>
            <person name="Mulligan S."/>
            <person name="Carty H.A."/>
            <person name="Cline R.T."/>
            <person name="Van Aken S.E."/>
            <person name="Gill J."/>
            <person name="Scarselli M."/>
            <person name="Mora M."/>
            <person name="Iacobini E.T."/>
            <person name="Brettoni C."/>
            <person name="Galli G."/>
            <person name="Mariani M."/>
            <person name="Vegni F."/>
            <person name="Maione D."/>
            <person name="Rinaudo D."/>
            <person name="Rappuoli R."/>
            <person name="Telford J.L."/>
            <person name="Kasper D.L."/>
            <person name="Grandi G."/>
            <person name="Fraser C.M."/>
        </authorList>
    </citation>
    <scope>NUCLEOTIDE SEQUENCE [LARGE SCALE GENOMIC DNA]</scope>
    <source>
        <strain>ATCC BAA-611 / 2603 V/R</strain>
    </source>
</reference>
<protein>
    <recommendedName>
        <fullName evidence="1">S-adenosylmethionine synthase</fullName>
        <shortName evidence="1">AdoMet synthase</shortName>
        <ecNumber evidence="1">2.5.1.6</ecNumber>
    </recommendedName>
    <alternativeName>
        <fullName evidence="1">MAT</fullName>
    </alternativeName>
    <alternativeName>
        <fullName evidence="1">Methionine adenosyltransferase</fullName>
    </alternativeName>
</protein>
<proteinExistence type="inferred from homology"/>
<gene>
    <name evidence="1" type="primary">metK</name>
    <name type="ordered locus">SAG0831</name>
</gene>
<comment type="function">
    <text evidence="1">Catalyzes the formation of S-adenosylmethionine (AdoMet) from methionine and ATP. The overall synthetic reaction is composed of two sequential steps, AdoMet formation and the subsequent tripolyphosphate hydrolysis which occurs prior to release of AdoMet from the enzyme.</text>
</comment>
<comment type="catalytic activity">
    <reaction evidence="1">
        <text>L-methionine + ATP + H2O = S-adenosyl-L-methionine + phosphate + diphosphate</text>
        <dbReference type="Rhea" id="RHEA:21080"/>
        <dbReference type="ChEBI" id="CHEBI:15377"/>
        <dbReference type="ChEBI" id="CHEBI:30616"/>
        <dbReference type="ChEBI" id="CHEBI:33019"/>
        <dbReference type="ChEBI" id="CHEBI:43474"/>
        <dbReference type="ChEBI" id="CHEBI:57844"/>
        <dbReference type="ChEBI" id="CHEBI:59789"/>
        <dbReference type="EC" id="2.5.1.6"/>
    </reaction>
</comment>
<comment type="cofactor">
    <cofactor evidence="1">
        <name>Mg(2+)</name>
        <dbReference type="ChEBI" id="CHEBI:18420"/>
    </cofactor>
    <text evidence="1">Binds 2 divalent ions per subunit.</text>
</comment>
<comment type="cofactor">
    <cofactor evidence="1">
        <name>K(+)</name>
        <dbReference type="ChEBI" id="CHEBI:29103"/>
    </cofactor>
    <text evidence="1">Binds 1 potassium ion per subunit.</text>
</comment>
<comment type="pathway">
    <text evidence="1">Amino-acid biosynthesis; S-adenosyl-L-methionine biosynthesis; S-adenosyl-L-methionine from L-methionine: step 1/1.</text>
</comment>
<comment type="subunit">
    <text evidence="1">Homotetramer; dimer of dimers.</text>
</comment>
<comment type="subcellular location">
    <subcellularLocation>
        <location evidence="1">Cytoplasm</location>
    </subcellularLocation>
</comment>
<comment type="similarity">
    <text evidence="1">Belongs to the AdoMet synthase family.</text>
</comment>